<name>211L_IIV6</name>
<reference key="1">
    <citation type="journal article" date="2001" name="Virology">
        <title>Analysis of the first complete DNA sequence of an invertebrate iridovirus: coding strategy of the genome of Chilo iridescent virus.</title>
        <authorList>
            <person name="Jakob N.J."/>
            <person name="Mueller K."/>
            <person name="Bahr U."/>
            <person name="Darai G."/>
        </authorList>
    </citation>
    <scope>NUCLEOTIDE SEQUENCE [LARGE SCALE GENOMIC DNA]</scope>
</reference>
<reference key="2">
    <citation type="journal article" date="2007" name="Virol. J.">
        <title>Comparative genomic analysis of the family Iridoviridae: re-annotating and defining the core set of iridovirus genes.</title>
        <authorList>
            <person name="Eaton H.E."/>
            <person name="Metcalf J."/>
            <person name="Penny E."/>
            <person name="Tcherepanov V."/>
            <person name="Upton C."/>
            <person name="Brunetti C.R."/>
        </authorList>
    </citation>
    <scope>GENOME REANNOTATION</scope>
</reference>
<dbReference type="EMBL" id="AF303741">
    <property type="protein sequence ID" value="AAK82073.1"/>
    <property type="molecule type" value="Genomic_DNA"/>
</dbReference>
<dbReference type="RefSeq" id="NP_149674.1">
    <property type="nucleotide sequence ID" value="NC_003038.1"/>
</dbReference>
<dbReference type="SMR" id="Q91FW0"/>
<dbReference type="KEGG" id="vg:1733245"/>
<dbReference type="OrthoDB" id="13638at10239"/>
<dbReference type="Proteomes" id="UP000001359">
    <property type="component" value="Genome"/>
</dbReference>
<dbReference type="InterPro" id="IPR022549">
    <property type="entry name" value="DUF3627"/>
</dbReference>
<dbReference type="InterPro" id="IPR018879">
    <property type="entry name" value="MSV199_dom"/>
</dbReference>
<dbReference type="Pfam" id="PF12299">
    <property type="entry name" value="DUF3627"/>
    <property type="match status" value="1"/>
</dbReference>
<dbReference type="Pfam" id="PF10553">
    <property type="entry name" value="MSV199"/>
    <property type="match status" value="1"/>
</dbReference>
<accession>Q91FW0</accession>
<proteinExistence type="predicted"/>
<evidence type="ECO:0000255" key="1"/>
<organismHost>
    <name type="scientific">Acheta domesticus</name>
    <name type="common">House cricket</name>
    <dbReference type="NCBI Taxonomy" id="6997"/>
</organismHost>
<organismHost>
    <name type="scientific">Chilo suppressalis</name>
    <name type="common">Asiatic rice borer moth</name>
    <dbReference type="NCBI Taxonomy" id="168631"/>
</organismHost>
<organismHost>
    <name type="scientific">Gryllus bimaculatus</name>
    <name type="common">Two-spotted cricket</name>
    <dbReference type="NCBI Taxonomy" id="6999"/>
</organismHost>
<organismHost>
    <name type="scientific">Gryllus campestris</name>
    <dbReference type="NCBI Taxonomy" id="58607"/>
</organismHost>
<organismHost>
    <name type="scientific">Spodoptera frugiperda</name>
    <name type="common">Fall armyworm</name>
    <dbReference type="NCBI Taxonomy" id="7108"/>
</organismHost>
<feature type="chain" id="PRO_0000377914" description="Putative MSV199 domain-containing protein 211L">
    <location>
        <begin position="1"/>
        <end position="390"/>
    </location>
</feature>
<feature type="coiled-coil region" evidence="1">
    <location>
        <begin position="181"/>
        <end position="263"/>
    </location>
</feature>
<organism>
    <name type="scientific">Invertebrate iridescent virus 6</name>
    <name type="common">IIV-6</name>
    <name type="synonym">Chilo iridescent virus</name>
    <dbReference type="NCBI Taxonomy" id="176652"/>
    <lineage>
        <taxon>Viruses</taxon>
        <taxon>Varidnaviria</taxon>
        <taxon>Bamfordvirae</taxon>
        <taxon>Nucleocytoviricota</taxon>
        <taxon>Megaviricetes</taxon>
        <taxon>Pimascovirales</taxon>
        <taxon>Iridoviridae</taxon>
        <taxon>Betairidovirinae</taxon>
        <taxon>Iridovirus</taxon>
    </lineage>
</organism>
<gene>
    <name type="ORF">IIV6-211L</name>
</gene>
<protein>
    <recommendedName>
        <fullName>Putative MSV199 domain-containing protein 211L</fullName>
    </recommendedName>
</protein>
<sequence>MEMNQKTAFMGINIKDEGPSNVMIIKALNSSSSLLDIPSFMKVAGIEFDPIMFNHFWQVLVDNGDRLPHVGETTLNWLGYEGVFTKQKEKFINMLKRNQISFKELSYQDNEIQLYPSIQKEMLLLPNESAKTKSKWLLMNPDDFKMAIMGLKTKNSEKIKRYYVTLEKTMKLHSEYALYFHDRKAQEEKERERQRAEDEKRSILGEMSEMRQYMQKMGITLEDTREEVKKVNIQNKDIKAQNEEIKAQNEDLAFDLSDVRDRLIEAAEDRSPKLETKPLRERFVIIKRKDSSFPYYAIRGQDVYVKGRLTHFKNTRYPELKIIFDTNYQPNPRNLYIRFKELKDERFIIAGNNIKTVDSSNKLEKEMLELFEKLNEEKHNIYFFFNFNDF</sequence>
<keyword id="KW-0175">Coiled coil</keyword>
<keyword id="KW-1185">Reference proteome</keyword>